<proteinExistence type="inferred from homology"/>
<accession>P0A0M7</accession>
<accession>P52080</accession>
<feature type="chain" id="PRO_0000201925" description="Putative acetyltransferase SA0906">
    <location>
        <begin position="1"/>
        <end position="144"/>
    </location>
</feature>
<feature type="domain" description="N-acetyltransferase" evidence="3">
    <location>
        <begin position="1"/>
        <end position="141"/>
    </location>
</feature>
<feature type="binding site" evidence="2">
    <location>
        <begin position="71"/>
        <end position="73"/>
    </location>
    <ligand>
        <name>CoA</name>
        <dbReference type="ChEBI" id="CHEBI:57287"/>
    </ligand>
</feature>
<feature type="binding site" evidence="2">
    <location>
        <position position="79"/>
    </location>
    <ligand>
        <name>CoA</name>
        <dbReference type="ChEBI" id="CHEBI:57287"/>
    </ligand>
</feature>
<feature type="binding site" evidence="2">
    <location>
        <begin position="112"/>
        <end position="114"/>
    </location>
    <ligand>
        <name>CoA</name>
        <dbReference type="ChEBI" id="CHEBI:57287"/>
    </ligand>
</feature>
<reference key="1">
    <citation type="journal article" date="2001" name="Lancet">
        <title>Whole genome sequencing of meticillin-resistant Staphylococcus aureus.</title>
        <authorList>
            <person name="Kuroda M."/>
            <person name="Ohta T."/>
            <person name="Uchiyama I."/>
            <person name="Baba T."/>
            <person name="Yuzawa H."/>
            <person name="Kobayashi I."/>
            <person name="Cui L."/>
            <person name="Oguchi A."/>
            <person name="Aoki K."/>
            <person name="Nagai Y."/>
            <person name="Lian J.-Q."/>
            <person name="Ito T."/>
            <person name="Kanamori M."/>
            <person name="Matsumaru H."/>
            <person name="Maruyama A."/>
            <person name="Murakami H."/>
            <person name="Hosoyama A."/>
            <person name="Mizutani-Ui Y."/>
            <person name="Takahashi N.K."/>
            <person name="Sawano T."/>
            <person name="Inoue R."/>
            <person name="Kaito C."/>
            <person name="Sekimizu K."/>
            <person name="Hirakawa H."/>
            <person name="Kuhara S."/>
            <person name="Goto S."/>
            <person name="Yabuzaki J."/>
            <person name="Kanehisa M."/>
            <person name="Yamashita A."/>
            <person name="Oshima K."/>
            <person name="Furuya K."/>
            <person name="Yoshino C."/>
            <person name="Shiba T."/>
            <person name="Hattori M."/>
            <person name="Ogasawara N."/>
            <person name="Hayashi H."/>
            <person name="Hiramatsu K."/>
        </authorList>
    </citation>
    <scope>NUCLEOTIDE SEQUENCE [LARGE SCALE GENOMIC DNA]</scope>
    <source>
        <strain>N315</strain>
    </source>
</reference>
<protein>
    <recommendedName>
        <fullName evidence="1">Putative acetyltransferase SA0906</fullName>
        <ecNumber>2.3.1.-</ecNumber>
    </recommendedName>
    <alternativeName>
        <fullName evidence="1">GCN5-related N-acetyltransferase</fullName>
        <shortName evidence="1">GNAT</shortName>
    </alternativeName>
</protein>
<dbReference type="EC" id="2.3.1.-"/>
<dbReference type="EMBL" id="BA000018">
    <property type="protein sequence ID" value="BAB42151.1"/>
    <property type="molecule type" value="Genomic_DNA"/>
</dbReference>
<dbReference type="PIR" id="D89874">
    <property type="entry name" value="D89874"/>
</dbReference>
<dbReference type="RefSeq" id="WP_000491986.1">
    <property type="nucleotide sequence ID" value="NC_002745.2"/>
</dbReference>
<dbReference type="SMR" id="P0A0M7"/>
<dbReference type="EnsemblBacteria" id="BAB42151">
    <property type="protein sequence ID" value="BAB42151"/>
    <property type="gene ID" value="BAB42151"/>
</dbReference>
<dbReference type="KEGG" id="sau:SA0906"/>
<dbReference type="HOGENOM" id="CLU_056607_6_2_9"/>
<dbReference type="GO" id="GO:0016747">
    <property type="term" value="F:acyltransferase activity, transferring groups other than amino-acyl groups"/>
    <property type="evidence" value="ECO:0000250"/>
    <property type="project" value="UniProtKB"/>
</dbReference>
<dbReference type="GO" id="GO:0004343">
    <property type="term" value="F:glucosamine 6-phosphate N-acetyltransferase activity"/>
    <property type="evidence" value="ECO:0007669"/>
    <property type="project" value="TreeGrafter"/>
</dbReference>
<dbReference type="CDD" id="cd04301">
    <property type="entry name" value="NAT_SF"/>
    <property type="match status" value="1"/>
</dbReference>
<dbReference type="FunFam" id="3.40.630.30:FF:000131">
    <property type="entry name" value="Acetyltransferase, GNAT family"/>
    <property type="match status" value="1"/>
</dbReference>
<dbReference type="Gene3D" id="3.40.630.30">
    <property type="match status" value="1"/>
</dbReference>
<dbReference type="InterPro" id="IPR016181">
    <property type="entry name" value="Acyl_CoA_acyltransferase"/>
</dbReference>
<dbReference type="InterPro" id="IPR000182">
    <property type="entry name" value="GNAT_dom"/>
</dbReference>
<dbReference type="InterPro" id="IPR039143">
    <property type="entry name" value="GNPNAT1-like"/>
</dbReference>
<dbReference type="PANTHER" id="PTHR13355">
    <property type="entry name" value="GLUCOSAMINE 6-PHOSPHATE N-ACETYLTRANSFERASE"/>
    <property type="match status" value="1"/>
</dbReference>
<dbReference type="PANTHER" id="PTHR13355:SF11">
    <property type="entry name" value="GLUCOSAMINE 6-PHOSPHATE N-ACETYLTRANSFERASE"/>
    <property type="match status" value="1"/>
</dbReference>
<dbReference type="Pfam" id="PF00583">
    <property type="entry name" value="Acetyltransf_1"/>
    <property type="match status" value="1"/>
</dbReference>
<dbReference type="SUPFAM" id="SSF55729">
    <property type="entry name" value="Acyl-CoA N-acyltransferases (Nat)"/>
    <property type="match status" value="1"/>
</dbReference>
<dbReference type="PROSITE" id="PS51186">
    <property type="entry name" value="GNAT"/>
    <property type="match status" value="1"/>
</dbReference>
<name>ATSE_STAAN</name>
<evidence type="ECO:0000250" key="1">
    <source>
        <dbReference type="UniProtKB" id="Q5HH30"/>
    </source>
</evidence>
<evidence type="ECO:0000250" key="2">
    <source>
        <dbReference type="UniProtKB" id="Q9I0Q8"/>
    </source>
</evidence>
<evidence type="ECO:0000255" key="3">
    <source>
        <dbReference type="PROSITE-ProRule" id="PRU00532"/>
    </source>
</evidence>
<evidence type="ECO:0000305" key="4"/>
<sequence length="144" mass="16556">MFSKVNNQKMLEDCFYIRKKVFVEEQGVPEESEIDEYESESIHLIGYDNGQPVATARIRPINETTVKIERVAVMKSHRGQGMGRMLMQAVESLAKDEGFYVATMNAQCHAIPFYESLNFKMRGNIFLEEGIEHIEMTKKLTSLN</sequence>
<keyword id="KW-0012">Acyltransferase</keyword>
<keyword id="KW-0808">Transferase</keyword>
<comment type="function">
    <text evidence="1">Could catalyze the transfer of an acetyl group from acetyl coenzyme A (AcCoA) to an acceptor substrate and release both CoA and the acetylated product.</text>
</comment>
<comment type="similarity">
    <text evidence="4">Belongs to the UPF0039 (ElaA) family.</text>
</comment>
<organism>
    <name type="scientific">Staphylococcus aureus (strain N315)</name>
    <dbReference type="NCBI Taxonomy" id="158879"/>
    <lineage>
        <taxon>Bacteria</taxon>
        <taxon>Bacillati</taxon>
        <taxon>Bacillota</taxon>
        <taxon>Bacilli</taxon>
        <taxon>Bacillales</taxon>
        <taxon>Staphylococcaceae</taxon>
        <taxon>Staphylococcus</taxon>
    </lineage>
</organism>
<gene>
    <name type="ordered locus">SA0906</name>
</gene>